<organism>
    <name type="scientific">Buchnera aphidicola subsp. Schlechtendalia chinensis</name>
    <dbReference type="NCBI Taxonomy" id="118110"/>
    <lineage>
        <taxon>Bacteria</taxon>
        <taxon>Pseudomonadati</taxon>
        <taxon>Pseudomonadota</taxon>
        <taxon>Gammaproteobacteria</taxon>
        <taxon>Enterobacterales</taxon>
        <taxon>Erwiniaceae</taxon>
        <taxon>Buchnera</taxon>
    </lineage>
</organism>
<protein>
    <recommendedName>
        <fullName evidence="1">Anthranilate phosphoribosyltransferase</fullName>
        <ecNumber evidence="1">2.4.2.18</ecNumber>
    </recommendedName>
</protein>
<name>TRPD_BUCSC</name>
<sequence>MNTILNQIYLGHSLTESETYKLFKLIMTGKINDIQLSSILTAINIRGESENEIIGAVRACLKYSKSFPKQNYMFSDIVGTGGDSSNSINISTASAFVGATCGLKIVKHCNTSISSMTGSCDLLKEFNIDLHASCEKSQNMLNKLNICFLFAPKYHANFKYISLVRKTLKIRTLFNILGPLINPSKPPLSLVGVYSTKLMVPMANVLKKLNSYHAIVVHSDHTDEVTLHDSTNVTELKNNNIISYTLCPDDFGVKYYNKNAILGGTPKENYEIIKYVLKGKGPHAISETIAVNVALLLKLYGNENLKKNTKCALKIIQSGKVYEKIIALSKF</sequence>
<dbReference type="EC" id="2.4.2.18" evidence="1"/>
<dbReference type="EMBL" id="U09185">
    <property type="protein sequence ID" value="AAA92794.1"/>
    <property type="molecule type" value="Genomic_DNA"/>
</dbReference>
<dbReference type="RefSeq" id="WP_075474164.1">
    <property type="nucleotide sequence ID" value="NZ_CP011299.1"/>
</dbReference>
<dbReference type="SMR" id="Q44602"/>
<dbReference type="STRING" id="118110.XW81_01315"/>
<dbReference type="OrthoDB" id="9806430at2"/>
<dbReference type="UniPathway" id="UPA00035">
    <property type="reaction ID" value="UER00041"/>
</dbReference>
<dbReference type="GO" id="GO:0005829">
    <property type="term" value="C:cytosol"/>
    <property type="evidence" value="ECO:0007669"/>
    <property type="project" value="TreeGrafter"/>
</dbReference>
<dbReference type="GO" id="GO:0004048">
    <property type="term" value="F:anthranilate phosphoribosyltransferase activity"/>
    <property type="evidence" value="ECO:0007669"/>
    <property type="project" value="UniProtKB-UniRule"/>
</dbReference>
<dbReference type="GO" id="GO:0000287">
    <property type="term" value="F:magnesium ion binding"/>
    <property type="evidence" value="ECO:0007669"/>
    <property type="project" value="UniProtKB-UniRule"/>
</dbReference>
<dbReference type="GO" id="GO:0000162">
    <property type="term" value="P:L-tryptophan biosynthetic process"/>
    <property type="evidence" value="ECO:0007669"/>
    <property type="project" value="UniProtKB-UniRule"/>
</dbReference>
<dbReference type="FunFam" id="3.40.1030.10:FF:000002">
    <property type="entry name" value="Anthranilate phosphoribosyltransferase"/>
    <property type="match status" value="1"/>
</dbReference>
<dbReference type="Gene3D" id="3.40.1030.10">
    <property type="entry name" value="Nucleoside phosphorylase/phosphoribosyltransferase catalytic domain"/>
    <property type="match status" value="1"/>
</dbReference>
<dbReference type="Gene3D" id="1.20.970.10">
    <property type="entry name" value="Transferase, Pyrimidine Nucleoside Phosphorylase, Chain C"/>
    <property type="match status" value="1"/>
</dbReference>
<dbReference type="HAMAP" id="MF_00211">
    <property type="entry name" value="TrpD"/>
    <property type="match status" value="1"/>
</dbReference>
<dbReference type="InterPro" id="IPR005940">
    <property type="entry name" value="Anthranilate_Pribosyl_Tfrase"/>
</dbReference>
<dbReference type="InterPro" id="IPR000312">
    <property type="entry name" value="Glycosyl_Trfase_fam3"/>
</dbReference>
<dbReference type="InterPro" id="IPR017459">
    <property type="entry name" value="Glycosyl_Trfase_fam3_N_dom"/>
</dbReference>
<dbReference type="InterPro" id="IPR036320">
    <property type="entry name" value="Glycosyl_Trfase_fam3_N_dom_sf"/>
</dbReference>
<dbReference type="InterPro" id="IPR035902">
    <property type="entry name" value="Nuc_phospho_transferase"/>
</dbReference>
<dbReference type="NCBIfam" id="TIGR01245">
    <property type="entry name" value="trpD"/>
    <property type="match status" value="1"/>
</dbReference>
<dbReference type="PANTHER" id="PTHR43285">
    <property type="entry name" value="ANTHRANILATE PHOSPHORIBOSYLTRANSFERASE"/>
    <property type="match status" value="1"/>
</dbReference>
<dbReference type="PANTHER" id="PTHR43285:SF2">
    <property type="entry name" value="ANTHRANILATE PHOSPHORIBOSYLTRANSFERASE"/>
    <property type="match status" value="1"/>
</dbReference>
<dbReference type="Pfam" id="PF02885">
    <property type="entry name" value="Glycos_trans_3N"/>
    <property type="match status" value="1"/>
</dbReference>
<dbReference type="Pfam" id="PF00591">
    <property type="entry name" value="Glycos_transf_3"/>
    <property type="match status" value="1"/>
</dbReference>
<dbReference type="SUPFAM" id="SSF52418">
    <property type="entry name" value="Nucleoside phosphorylase/phosphoribosyltransferase catalytic domain"/>
    <property type="match status" value="1"/>
</dbReference>
<dbReference type="SUPFAM" id="SSF47648">
    <property type="entry name" value="Nucleoside phosphorylase/phosphoribosyltransferase N-terminal domain"/>
    <property type="match status" value="1"/>
</dbReference>
<reference key="1">
    <citation type="journal article" date="1995" name="Insect Mol. Biol.">
        <title>Genetics of the tryptophan biosynthetic pathway of the prokaryotic endosymbiont (Buchnera) of the aphid Schlechtendalia chinensis.</title>
        <authorList>
            <person name="Lai C.-Y."/>
            <person name="Baumann P."/>
            <person name="Moran N.A."/>
        </authorList>
    </citation>
    <scope>NUCLEOTIDE SEQUENCE [GENOMIC DNA]</scope>
</reference>
<comment type="function">
    <text evidence="1">Catalyzes the transfer of the phosphoribosyl group of 5-phosphorylribose-1-pyrophosphate (PRPP) to anthranilate to yield N-(5'-phosphoribosyl)-anthranilate (PRA).</text>
</comment>
<comment type="catalytic activity">
    <reaction evidence="1">
        <text>N-(5-phospho-beta-D-ribosyl)anthranilate + diphosphate = 5-phospho-alpha-D-ribose 1-diphosphate + anthranilate</text>
        <dbReference type="Rhea" id="RHEA:11768"/>
        <dbReference type="ChEBI" id="CHEBI:16567"/>
        <dbReference type="ChEBI" id="CHEBI:18277"/>
        <dbReference type="ChEBI" id="CHEBI:33019"/>
        <dbReference type="ChEBI" id="CHEBI:58017"/>
        <dbReference type="EC" id="2.4.2.18"/>
    </reaction>
</comment>
<comment type="cofactor">
    <cofactor evidence="1">
        <name>Mg(2+)</name>
        <dbReference type="ChEBI" id="CHEBI:18420"/>
    </cofactor>
    <text evidence="1">Binds 2 magnesium ions per monomer.</text>
</comment>
<comment type="pathway">
    <text evidence="1">Amino-acid biosynthesis; L-tryptophan biosynthesis; L-tryptophan from chorismate: step 2/5.</text>
</comment>
<comment type="subunit">
    <text evidence="1">Homodimer.</text>
</comment>
<comment type="similarity">
    <text evidence="1">Belongs to the anthranilate phosphoribosyltransferase family.</text>
</comment>
<accession>Q44602</accession>
<feature type="chain" id="PRO_0000154439" description="Anthranilate phosphoribosyltransferase">
    <location>
        <begin position="1"/>
        <end position="331"/>
    </location>
</feature>
<feature type="binding site" evidence="1">
    <location>
        <position position="79"/>
    </location>
    <ligand>
        <name>5-phospho-alpha-D-ribose 1-diphosphate</name>
        <dbReference type="ChEBI" id="CHEBI:58017"/>
    </ligand>
</feature>
<feature type="binding site" evidence="1">
    <location>
        <position position="79"/>
    </location>
    <ligand>
        <name>anthranilate</name>
        <dbReference type="ChEBI" id="CHEBI:16567"/>
        <label>1</label>
    </ligand>
</feature>
<feature type="binding site" evidence="1">
    <location>
        <begin position="82"/>
        <end position="83"/>
    </location>
    <ligand>
        <name>5-phospho-alpha-D-ribose 1-diphosphate</name>
        <dbReference type="ChEBI" id="CHEBI:58017"/>
    </ligand>
</feature>
<feature type="binding site" evidence="1">
    <location>
        <position position="87"/>
    </location>
    <ligand>
        <name>5-phospho-alpha-D-ribose 1-diphosphate</name>
        <dbReference type="ChEBI" id="CHEBI:58017"/>
    </ligand>
</feature>
<feature type="binding site" evidence="1">
    <location>
        <begin position="89"/>
        <end position="92"/>
    </location>
    <ligand>
        <name>5-phospho-alpha-D-ribose 1-diphosphate</name>
        <dbReference type="ChEBI" id="CHEBI:58017"/>
    </ligand>
</feature>
<feature type="binding site" evidence="1">
    <location>
        <position position="91"/>
    </location>
    <ligand>
        <name>Mg(2+)</name>
        <dbReference type="ChEBI" id="CHEBI:18420"/>
        <label>1</label>
    </ligand>
</feature>
<feature type="binding site" evidence="1">
    <location>
        <begin position="107"/>
        <end position="115"/>
    </location>
    <ligand>
        <name>5-phospho-alpha-D-ribose 1-diphosphate</name>
        <dbReference type="ChEBI" id="CHEBI:58017"/>
    </ligand>
</feature>
<feature type="binding site" evidence="1">
    <location>
        <position position="110"/>
    </location>
    <ligand>
        <name>anthranilate</name>
        <dbReference type="ChEBI" id="CHEBI:16567"/>
        <label>1</label>
    </ligand>
</feature>
<feature type="binding site" evidence="1">
    <location>
        <position position="119"/>
    </location>
    <ligand>
        <name>5-phospho-alpha-D-ribose 1-diphosphate</name>
        <dbReference type="ChEBI" id="CHEBI:58017"/>
    </ligand>
</feature>
<feature type="binding site" evidence="1">
    <location>
        <position position="165"/>
    </location>
    <ligand>
        <name>anthranilate</name>
        <dbReference type="ChEBI" id="CHEBI:16567"/>
        <label>2</label>
    </ligand>
</feature>
<feature type="binding site" evidence="1">
    <location>
        <position position="223"/>
    </location>
    <ligand>
        <name>Mg(2+)</name>
        <dbReference type="ChEBI" id="CHEBI:18420"/>
        <label>2</label>
    </ligand>
</feature>
<feature type="binding site" evidence="1">
    <location>
        <position position="224"/>
    </location>
    <ligand>
        <name>Mg(2+)</name>
        <dbReference type="ChEBI" id="CHEBI:18420"/>
        <label>1</label>
    </ligand>
</feature>
<feature type="binding site" evidence="1">
    <location>
        <position position="224"/>
    </location>
    <ligand>
        <name>Mg(2+)</name>
        <dbReference type="ChEBI" id="CHEBI:18420"/>
        <label>2</label>
    </ligand>
</feature>
<evidence type="ECO:0000255" key="1">
    <source>
        <dbReference type="HAMAP-Rule" id="MF_00211"/>
    </source>
</evidence>
<keyword id="KW-0028">Amino-acid biosynthesis</keyword>
<keyword id="KW-0057">Aromatic amino acid biosynthesis</keyword>
<keyword id="KW-0328">Glycosyltransferase</keyword>
<keyword id="KW-0460">Magnesium</keyword>
<keyword id="KW-0479">Metal-binding</keyword>
<keyword id="KW-0808">Transferase</keyword>
<keyword id="KW-0822">Tryptophan biosynthesis</keyword>
<gene>
    <name evidence="1" type="primary">trpD</name>
</gene>
<proteinExistence type="inferred from homology"/>